<feature type="chain" id="PRO_0000292081" description="Probable chorismate pyruvate-lyase">
    <location>
        <begin position="1"/>
        <end position="190"/>
    </location>
</feature>
<feature type="binding site" evidence="1">
    <location>
        <position position="77"/>
    </location>
    <ligand>
        <name>substrate</name>
    </ligand>
</feature>
<feature type="binding site" evidence="1">
    <location>
        <position position="115"/>
    </location>
    <ligand>
        <name>substrate</name>
    </ligand>
</feature>
<feature type="binding site" evidence="1">
    <location>
        <position position="174"/>
    </location>
    <ligand>
        <name>substrate</name>
    </ligand>
</feature>
<reference key="1">
    <citation type="submission" date="2006-08" db="EMBL/GenBank/DDBJ databases">
        <title>Complete sequence of Shewanella sp. MR-4.</title>
        <authorList>
            <consortium name="US DOE Joint Genome Institute"/>
            <person name="Copeland A."/>
            <person name="Lucas S."/>
            <person name="Lapidus A."/>
            <person name="Barry K."/>
            <person name="Detter J.C."/>
            <person name="Glavina del Rio T."/>
            <person name="Hammon N."/>
            <person name="Israni S."/>
            <person name="Dalin E."/>
            <person name="Tice H."/>
            <person name="Pitluck S."/>
            <person name="Kiss H."/>
            <person name="Brettin T."/>
            <person name="Bruce D."/>
            <person name="Han C."/>
            <person name="Tapia R."/>
            <person name="Gilna P."/>
            <person name="Schmutz J."/>
            <person name="Larimer F."/>
            <person name="Land M."/>
            <person name="Hauser L."/>
            <person name="Kyrpides N."/>
            <person name="Mikhailova N."/>
            <person name="Nealson K."/>
            <person name="Konstantinidis K."/>
            <person name="Klappenbach J."/>
            <person name="Tiedje J."/>
            <person name="Richardson P."/>
        </authorList>
    </citation>
    <scope>NUCLEOTIDE SEQUENCE [LARGE SCALE GENOMIC DNA]</scope>
    <source>
        <strain>MR-4</strain>
    </source>
</reference>
<sequence>MSVTSLSFPYGESIQWFCADNAKNLPSSPLKEWLLAPGSLTQKLKGCCDKFEVKILGEGQCVPLEGEYPKQNAVWVREVLLCLDSVPWVFARTLIPQSLLSTRQADFLGLGTRPLGELLFSQDSFVPGRIEIARFTTESRLAQLAQSLAQNVEHELWGRRRYFHHDQEEMFVSEMFLPAAVQAMAKLKLD</sequence>
<gene>
    <name evidence="1" type="primary">ubiC</name>
    <name type="ordered locus">Shewmr4_0126</name>
</gene>
<protein>
    <recommendedName>
        <fullName evidence="1">Probable chorismate pyruvate-lyase</fullName>
        <shortName evidence="1">CL</shortName>
        <shortName evidence="1">CPL</shortName>
        <ecNumber evidence="1">4.1.3.40</ecNumber>
    </recommendedName>
</protein>
<accession>Q0HP10</accession>
<name>UBIC_SHESM</name>
<dbReference type="EC" id="4.1.3.40" evidence="1"/>
<dbReference type="EMBL" id="CP000446">
    <property type="protein sequence ID" value="ABI37207.1"/>
    <property type="molecule type" value="Genomic_DNA"/>
</dbReference>
<dbReference type="RefSeq" id="WP_011620959.1">
    <property type="nucleotide sequence ID" value="NC_008321.1"/>
</dbReference>
<dbReference type="SMR" id="Q0HP10"/>
<dbReference type="KEGG" id="she:Shewmr4_0126"/>
<dbReference type="HOGENOM" id="CLU_096824_1_1_6"/>
<dbReference type="UniPathway" id="UPA00232"/>
<dbReference type="GO" id="GO:0005829">
    <property type="term" value="C:cytosol"/>
    <property type="evidence" value="ECO:0007669"/>
    <property type="project" value="TreeGrafter"/>
</dbReference>
<dbReference type="GO" id="GO:0008813">
    <property type="term" value="F:chorismate lyase activity"/>
    <property type="evidence" value="ECO:0007669"/>
    <property type="project" value="UniProtKB-UniRule"/>
</dbReference>
<dbReference type="GO" id="GO:0042866">
    <property type="term" value="P:pyruvate biosynthetic process"/>
    <property type="evidence" value="ECO:0007669"/>
    <property type="project" value="UniProtKB-UniRule"/>
</dbReference>
<dbReference type="GO" id="GO:0006744">
    <property type="term" value="P:ubiquinone biosynthetic process"/>
    <property type="evidence" value="ECO:0007669"/>
    <property type="project" value="UniProtKB-UniRule"/>
</dbReference>
<dbReference type="FunFam" id="3.40.1410.10:FF:000045">
    <property type="entry name" value="Probable chorismate pyruvate-lyase"/>
    <property type="match status" value="1"/>
</dbReference>
<dbReference type="Gene3D" id="3.40.1410.10">
    <property type="entry name" value="Chorismate lyase-like"/>
    <property type="match status" value="1"/>
</dbReference>
<dbReference type="HAMAP" id="MF_01632">
    <property type="entry name" value="UbiC"/>
    <property type="match status" value="1"/>
</dbReference>
<dbReference type="InterPro" id="IPR007440">
    <property type="entry name" value="Chorismate--pyruvate_lyase"/>
</dbReference>
<dbReference type="InterPro" id="IPR028978">
    <property type="entry name" value="Chorismate_lyase_/UTRA_dom_sf"/>
</dbReference>
<dbReference type="PANTHER" id="PTHR38683">
    <property type="entry name" value="CHORISMATE PYRUVATE-LYASE"/>
    <property type="match status" value="1"/>
</dbReference>
<dbReference type="PANTHER" id="PTHR38683:SF1">
    <property type="entry name" value="CHORISMATE PYRUVATE-LYASE"/>
    <property type="match status" value="1"/>
</dbReference>
<dbReference type="Pfam" id="PF04345">
    <property type="entry name" value="Chor_lyase"/>
    <property type="match status" value="1"/>
</dbReference>
<dbReference type="SUPFAM" id="SSF64288">
    <property type="entry name" value="Chorismate lyase-like"/>
    <property type="match status" value="1"/>
</dbReference>
<organism>
    <name type="scientific">Shewanella sp. (strain MR-4)</name>
    <dbReference type="NCBI Taxonomy" id="60480"/>
    <lineage>
        <taxon>Bacteria</taxon>
        <taxon>Pseudomonadati</taxon>
        <taxon>Pseudomonadota</taxon>
        <taxon>Gammaproteobacteria</taxon>
        <taxon>Alteromonadales</taxon>
        <taxon>Shewanellaceae</taxon>
        <taxon>Shewanella</taxon>
    </lineage>
</organism>
<comment type="function">
    <text evidence="1">Removes the pyruvyl group from chorismate, with concomitant aromatization of the ring, to provide 4-hydroxybenzoate (4HB) for the ubiquinone pathway.</text>
</comment>
<comment type="catalytic activity">
    <reaction evidence="1">
        <text>chorismate = 4-hydroxybenzoate + pyruvate</text>
        <dbReference type="Rhea" id="RHEA:16505"/>
        <dbReference type="ChEBI" id="CHEBI:15361"/>
        <dbReference type="ChEBI" id="CHEBI:17879"/>
        <dbReference type="ChEBI" id="CHEBI:29748"/>
        <dbReference type="EC" id="4.1.3.40"/>
    </reaction>
</comment>
<comment type="pathway">
    <text evidence="1">Cofactor biosynthesis; ubiquinone biosynthesis.</text>
</comment>
<comment type="subcellular location">
    <subcellularLocation>
        <location evidence="1">Cytoplasm</location>
    </subcellularLocation>
</comment>
<comment type="similarity">
    <text evidence="1">Belongs to the UbiC family.</text>
</comment>
<keyword id="KW-0963">Cytoplasm</keyword>
<keyword id="KW-0456">Lyase</keyword>
<keyword id="KW-0670">Pyruvate</keyword>
<keyword id="KW-0831">Ubiquinone biosynthesis</keyword>
<evidence type="ECO:0000255" key="1">
    <source>
        <dbReference type="HAMAP-Rule" id="MF_01632"/>
    </source>
</evidence>
<proteinExistence type="inferred from homology"/>